<dbReference type="EC" id="2.7.7.-" evidence="1"/>
<dbReference type="EC" id="2.7.7.108" evidence="1"/>
<dbReference type="EMBL" id="CP000764">
    <property type="protein sequence ID" value="ABS22464.1"/>
    <property type="molecule type" value="Genomic_DNA"/>
</dbReference>
<dbReference type="RefSeq" id="WP_012094657.1">
    <property type="nucleotide sequence ID" value="NC_009674.1"/>
</dbReference>
<dbReference type="SMR" id="A7GQQ6"/>
<dbReference type="STRING" id="315749.Bcer98_2214"/>
<dbReference type="GeneID" id="33897488"/>
<dbReference type="KEGG" id="bcy:Bcer98_2214"/>
<dbReference type="eggNOG" id="COG0397">
    <property type="taxonomic scope" value="Bacteria"/>
</dbReference>
<dbReference type="HOGENOM" id="CLU_010245_4_1_9"/>
<dbReference type="OrthoDB" id="9773505at2"/>
<dbReference type="Proteomes" id="UP000002300">
    <property type="component" value="Chromosome"/>
</dbReference>
<dbReference type="GO" id="GO:0070733">
    <property type="term" value="F:AMPylase activity"/>
    <property type="evidence" value="ECO:0007669"/>
    <property type="project" value="TreeGrafter"/>
</dbReference>
<dbReference type="GO" id="GO:0005524">
    <property type="term" value="F:ATP binding"/>
    <property type="evidence" value="ECO:0007669"/>
    <property type="project" value="UniProtKB-UniRule"/>
</dbReference>
<dbReference type="GO" id="GO:0000287">
    <property type="term" value="F:magnesium ion binding"/>
    <property type="evidence" value="ECO:0007669"/>
    <property type="project" value="UniProtKB-UniRule"/>
</dbReference>
<dbReference type="HAMAP" id="MF_00692">
    <property type="entry name" value="YdiU_SelO"/>
    <property type="match status" value="1"/>
</dbReference>
<dbReference type="InterPro" id="IPR003846">
    <property type="entry name" value="SelO"/>
</dbReference>
<dbReference type="NCBIfam" id="NF000658">
    <property type="entry name" value="PRK00029.1"/>
    <property type="match status" value="1"/>
</dbReference>
<dbReference type="PANTHER" id="PTHR32057">
    <property type="entry name" value="PROTEIN ADENYLYLTRANSFERASE SELO, MITOCHONDRIAL"/>
    <property type="match status" value="1"/>
</dbReference>
<dbReference type="PANTHER" id="PTHR32057:SF14">
    <property type="entry name" value="PROTEIN ADENYLYLTRANSFERASE SELO, MITOCHONDRIAL"/>
    <property type="match status" value="1"/>
</dbReference>
<dbReference type="Pfam" id="PF02696">
    <property type="entry name" value="SelO"/>
    <property type="match status" value="1"/>
</dbReference>
<sequence length="491" mass="55105">MEKKTKRQETGWNFDNSYARLPESFFSKLLPAPVRAPKLVVLNDSLATSLGLDAEALKSEEGVAVLAGNKVPEGASPLAQAYAGHQFGHFNMLGDGRALLISEQITPSGQRFDIQLKGSGRTPYSRRGDGRAALGPMLREYIISEAMYALGIPTTRSLAVTTTGESIFRETELPGAILTRVASSHIRVGTFQYAAATRSIEDLKSLADYTIKRHFPHIEAHETPYLALLQEVIERQASLIAKWQLVGFIHGVMNTDNMTISGETIDYGPCAFMDTYNPVTVFSSIDMQGRYAYGNQPYIGVWNLARLAESLLPLLHTDIEQAAQIAQNTISKFGPLYEKHWLAGMRAKLGIFNEEATDKELMEELLNTMEKYRADYTNTFLALTFDTNKDTDFFKSEAFTSWHKKWEERLSRQEESKSSSQQLMRDNNPAIIPRNHRVEEALEAAVKQEDYRVMERLLAALSSPYAHSPEQYEYATVPEPSTQPYRTFCGT</sequence>
<gene>
    <name evidence="1" type="primary">ydiU</name>
    <name evidence="1" type="synonym">selO</name>
    <name type="ordered locus">Bcer98_2214</name>
</gene>
<proteinExistence type="inferred from homology"/>
<name>SELO_BACCN</name>
<organism>
    <name type="scientific">Bacillus cytotoxicus (strain DSM 22905 / CIP 110041 / 391-98 / NVH 391-98)</name>
    <dbReference type="NCBI Taxonomy" id="315749"/>
    <lineage>
        <taxon>Bacteria</taxon>
        <taxon>Bacillati</taxon>
        <taxon>Bacillota</taxon>
        <taxon>Bacilli</taxon>
        <taxon>Bacillales</taxon>
        <taxon>Bacillaceae</taxon>
        <taxon>Bacillus</taxon>
        <taxon>Bacillus cereus group</taxon>
    </lineage>
</organism>
<accession>A7GQQ6</accession>
<keyword id="KW-0067">ATP-binding</keyword>
<keyword id="KW-0460">Magnesium</keyword>
<keyword id="KW-0464">Manganese</keyword>
<keyword id="KW-0479">Metal-binding</keyword>
<keyword id="KW-0547">Nucleotide-binding</keyword>
<keyword id="KW-0548">Nucleotidyltransferase</keyword>
<keyword id="KW-0808">Transferase</keyword>
<reference key="1">
    <citation type="journal article" date="2008" name="Chem. Biol. Interact.">
        <title>Extending the Bacillus cereus group genomics to putative food-borne pathogens of different toxicity.</title>
        <authorList>
            <person name="Lapidus A."/>
            <person name="Goltsman E."/>
            <person name="Auger S."/>
            <person name="Galleron N."/>
            <person name="Segurens B."/>
            <person name="Dossat C."/>
            <person name="Land M.L."/>
            <person name="Broussolle V."/>
            <person name="Brillard J."/>
            <person name="Guinebretiere M.-H."/>
            <person name="Sanchis V."/>
            <person name="Nguen-the C."/>
            <person name="Lereclus D."/>
            <person name="Richardson P."/>
            <person name="Wincker P."/>
            <person name="Weissenbach J."/>
            <person name="Ehrlich S.D."/>
            <person name="Sorokin A."/>
        </authorList>
    </citation>
    <scope>NUCLEOTIDE SEQUENCE [LARGE SCALE GENOMIC DNA]</scope>
    <source>
        <strain>DSM 22905 / CIP 110041 / 391-98 / NVH 391-98</strain>
    </source>
</reference>
<feature type="chain" id="PRO_1000083127" description="Protein nucleotidyltransferase YdiU">
    <location>
        <begin position="1"/>
        <end position="491"/>
    </location>
</feature>
<feature type="active site" description="Proton acceptor" evidence="1">
    <location>
        <position position="256"/>
    </location>
</feature>
<feature type="binding site" evidence="1">
    <location>
        <position position="94"/>
    </location>
    <ligand>
        <name>ATP</name>
        <dbReference type="ChEBI" id="CHEBI:30616"/>
    </ligand>
</feature>
<feature type="binding site" evidence="1">
    <location>
        <position position="96"/>
    </location>
    <ligand>
        <name>ATP</name>
        <dbReference type="ChEBI" id="CHEBI:30616"/>
    </ligand>
</feature>
<feature type="binding site" evidence="1">
    <location>
        <position position="97"/>
    </location>
    <ligand>
        <name>ATP</name>
        <dbReference type="ChEBI" id="CHEBI:30616"/>
    </ligand>
</feature>
<feature type="binding site" evidence="1">
    <location>
        <position position="117"/>
    </location>
    <ligand>
        <name>ATP</name>
        <dbReference type="ChEBI" id="CHEBI:30616"/>
    </ligand>
</feature>
<feature type="binding site" evidence="1">
    <location>
        <position position="129"/>
    </location>
    <ligand>
        <name>ATP</name>
        <dbReference type="ChEBI" id="CHEBI:30616"/>
    </ligand>
</feature>
<feature type="binding site" evidence="1">
    <location>
        <position position="130"/>
    </location>
    <ligand>
        <name>ATP</name>
        <dbReference type="ChEBI" id="CHEBI:30616"/>
    </ligand>
</feature>
<feature type="binding site" evidence="1">
    <location>
        <position position="180"/>
    </location>
    <ligand>
        <name>ATP</name>
        <dbReference type="ChEBI" id="CHEBI:30616"/>
    </ligand>
</feature>
<feature type="binding site" evidence="1">
    <location>
        <position position="187"/>
    </location>
    <ligand>
        <name>ATP</name>
        <dbReference type="ChEBI" id="CHEBI:30616"/>
    </ligand>
</feature>
<feature type="binding site" evidence="1">
    <location>
        <position position="257"/>
    </location>
    <ligand>
        <name>Mg(2+)</name>
        <dbReference type="ChEBI" id="CHEBI:18420"/>
    </ligand>
</feature>
<feature type="binding site" evidence="1">
    <location>
        <position position="266"/>
    </location>
    <ligand>
        <name>ATP</name>
        <dbReference type="ChEBI" id="CHEBI:30616"/>
    </ligand>
</feature>
<feature type="binding site" evidence="1">
    <location>
        <position position="266"/>
    </location>
    <ligand>
        <name>Mg(2+)</name>
        <dbReference type="ChEBI" id="CHEBI:18420"/>
    </ligand>
</feature>
<evidence type="ECO:0000255" key="1">
    <source>
        <dbReference type="HAMAP-Rule" id="MF_00692"/>
    </source>
</evidence>
<protein>
    <recommendedName>
        <fullName evidence="1">Protein nucleotidyltransferase YdiU</fullName>
        <ecNumber evidence="1">2.7.7.-</ecNumber>
    </recommendedName>
    <alternativeName>
        <fullName evidence="1">Protein adenylyltransferase YdiU</fullName>
        <ecNumber evidence="1">2.7.7.108</ecNumber>
    </alternativeName>
    <alternativeName>
        <fullName evidence="1">Protein uridylyltransferase YdiU</fullName>
        <ecNumber evidence="1">2.7.7.-</ecNumber>
    </alternativeName>
</protein>
<comment type="function">
    <text evidence="1">Nucleotidyltransferase involved in the post-translational modification of proteins. It can catalyze the addition of adenosine monophosphate (AMP) or uridine monophosphate (UMP) to a protein, resulting in modifications known as AMPylation and UMPylation.</text>
</comment>
<comment type="catalytic activity">
    <reaction evidence="1">
        <text>L-seryl-[protein] + ATP = 3-O-(5'-adenylyl)-L-seryl-[protein] + diphosphate</text>
        <dbReference type="Rhea" id="RHEA:58120"/>
        <dbReference type="Rhea" id="RHEA-COMP:9863"/>
        <dbReference type="Rhea" id="RHEA-COMP:15073"/>
        <dbReference type="ChEBI" id="CHEBI:29999"/>
        <dbReference type="ChEBI" id="CHEBI:30616"/>
        <dbReference type="ChEBI" id="CHEBI:33019"/>
        <dbReference type="ChEBI" id="CHEBI:142516"/>
        <dbReference type="EC" id="2.7.7.108"/>
    </reaction>
</comment>
<comment type="catalytic activity">
    <reaction evidence="1">
        <text>L-threonyl-[protein] + ATP = 3-O-(5'-adenylyl)-L-threonyl-[protein] + diphosphate</text>
        <dbReference type="Rhea" id="RHEA:54292"/>
        <dbReference type="Rhea" id="RHEA-COMP:11060"/>
        <dbReference type="Rhea" id="RHEA-COMP:13847"/>
        <dbReference type="ChEBI" id="CHEBI:30013"/>
        <dbReference type="ChEBI" id="CHEBI:30616"/>
        <dbReference type="ChEBI" id="CHEBI:33019"/>
        <dbReference type="ChEBI" id="CHEBI:138113"/>
        <dbReference type="EC" id="2.7.7.108"/>
    </reaction>
</comment>
<comment type="catalytic activity">
    <reaction evidence="1">
        <text>L-tyrosyl-[protein] + ATP = O-(5'-adenylyl)-L-tyrosyl-[protein] + diphosphate</text>
        <dbReference type="Rhea" id="RHEA:54288"/>
        <dbReference type="Rhea" id="RHEA-COMP:10136"/>
        <dbReference type="Rhea" id="RHEA-COMP:13846"/>
        <dbReference type="ChEBI" id="CHEBI:30616"/>
        <dbReference type="ChEBI" id="CHEBI:33019"/>
        <dbReference type="ChEBI" id="CHEBI:46858"/>
        <dbReference type="ChEBI" id="CHEBI:83624"/>
        <dbReference type="EC" id="2.7.7.108"/>
    </reaction>
</comment>
<comment type="catalytic activity">
    <reaction evidence="1">
        <text>L-histidyl-[protein] + UTP = N(tele)-(5'-uridylyl)-L-histidyl-[protein] + diphosphate</text>
        <dbReference type="Rhea" id="RHEA:83891"/>
        <dbReference type="Rhea" id="RHEA-COMP:9745"/>
        <dbReference type="Rhea" id="RHEA-COMP:20239"/>
        <dbReference type="ChEBI" id="CHEBI:29979"/>
        <dbReference type="ChEBI" id="CHEBI:33019"/>
        <dbReference type="ChEBI" id="CHEBI:46398"/>
        <dbReference type="ChEBI" id="CHEBI:233474"/>
    </reaction>
</comment>
<comment type="catalytic activity">
    <reaction evidence="1">
        <text>L-seryl-[protein] + UTP = O-(5'-uridylyl)-L-seryl-[protein] + diphosphate</text>
        <dbReference type="Rhea" id="RHEA:64604"/>
        <dbReference type="Rhea" id="RHEA-COMP:9863"/>
        <dbReference type="Rhea" id="RHEA-COMP:16635"/>
        <dbReference type="ChEBI" id="CHEBI:29999"/>
        <dbReference type="ChEBI" id="CHEBI:33019"/>
        <dbReference type="ChEBI" id="CHEBI:46398"/>
        <dbReference type="ChEBI" id="CHEBI:156051"/>
    </reaction>
</comment>
<comment type="catalytic activity">
    <reaction evidence="1">
        <text>L-tyrosyl-[protein] + UTP = O-(5'-uridylyl)-L-tyrosyl-[protein] + diphosphate</text>
        <dbReference type="Rhea" id="RHEA:83887"/>
        <dbReference type="Rhea" id="RHEA-COMP:10136"/>
        <dbReference type="Rhea" id="RHEA-COMP:20238"/>
        <dbReference type="ChEBI" id="CHEBI:33019"/>
        <dbReference type="ChEBI" id="CHEBI:46398"/>
        <dbReference type="ChEBI" id="CHEBI:46858"/>
        <dbReference type="ChEBI" id="CHEBI:90602"/>
    </reaction>
</comment>
<comment type="cofactor">
    <cofactor evidence="1">
        <name>Mg(2+)</name>
        <dbReference type="ChEBI" id="CHEBI:18420"/>
    </cofactor>
    <cofactor evidence="1">
        <name>Mn(2+)</name>
        <dbReference type="ChEBI" id="CHEBI:29035"/>
    </cofactor>
</comment>
<comment type="similarity">
    <text evidence="1">Belongs to the SELO family.</text>
</comment>